<gene>
    <name type="primary">COL7</name>
    <name type="ordered locus">At1g73870</name>
    <name type="ORF">F2P9.26</name>
</gene>
<feature type="chain" id="PRO_0000113284" description="Zinc finger protein CONSTANS-LIKE 7">
    <location>
        <begin position="1"/>
        <end position="392"/>
    </location>
</feature>
<feature type="domain" description="CCT" evidence="3">
    <location>
        <begin position="345"/>
        <end position="387"/>
    </location>
</feature>
<feature type="zinc finger region" description="B box-type; atypical" evidence="2">
    <location>
        <begin position="22"/>
        <end position="65"/>
    </location>
</feature>
<feature type="region of interest" description="Disordered" evidence="4">
    <location>
        <begin position="246"/>
        <end position="271"/>
    </location>
</feature>
<feature type="region of interest" description="Disordered" evidence="4">
    <location>
        <begin position="326"/>
        <end position="346"/>
    </location>
</feature>
<feature type="coiled-coil region" evidence="1">
    <location>
        <begin position="226"/>
        <end position="254"/>
    </location>
</feature>
<feature type="compositionally biased region" description="Basic and acidic residues" evidence="4">
    <location>
        <begin position="259"/>
        <end position="271"/>
    </location>
</feature>
<feature type="binding site" evidence="2">
    <location>
        <position position="22"/>
    </location>
    <ligand>
        <name>Zn(2+)</name>
        <dbReference type="ChEBI" id="CHEBI:29105"/>
    </ligand>
</feature>
<feature type="binding site" evidence="2">
    <location>
        <position position="25"/>
    </location>
    <ligand>
        <name>Zn(2+)</name>
        <dbReference type="ChEBI" id="CHEBI:29105"/>
    </ligand>
</feature>
<feature type="binding site" evidence="2">
    <location>
        <position position="46"/>
    </location>
    <ligand>
        <name>Zn(2+)</name>
        <dbReference type="ChEBI" id="CHEBI:29105"/>
    </ligand>
</feature>
<feature type="binding site" evidence="2">
    <location>
        <position position="51"/>
    </location>
    <ligand>
        <name>Zn(2+)</name>
        <dbReference type="ChEBI" id="CHEBI:29105"/>
    </ligand>
</feature>
<name>COL7_ARATH</name>
<accession>Q9C9A9</accession>
<accession>Q5XF76</accession>
<organism>
    <name type="scientific">Arabidopsis thaliana</name>
    <name type="common">Mouse-ear cress</name>
    <dbReference type="NCBI Taxonomy" id="3702"/>
    <lineage>
        <taxon>Eukaryota</taxon>
        <taxon>Viridiplantae</taxon>
        <taxon>Streptophyta</taxon>
        <taxon>Embryophyta</taxon>
        <taxon>Tracheophyta</taxon>
        <taxon>Spermatophyta</taxon>
        <taxon>Magnoliopsida</taxon>
        <taxon>eudicotyledons</taxon>
        <taxon>Gunneridae</taxon>
        <taxon>Pentapetalae</taxon>
        <taxon>rosids</taxon>
        <taxon>malvids</taxon>
        <taxon>Brassicales</taxon>
        <taxon>Brassicaceae</taxon>
        <taxon>Camelineae</taxon>
        <taxon>Arabidopsis</taxon>
    </lineage>
</organism>
<sequence length="392" mass="44018">MVVDVESRTASVTGEKMAARGCDACMKRSRASWYCPADDAFLCQSCDASIHSANHLAKRHERVRLQSSSPTETADKTTSVWYEGFRRKARTPRSKSCAFEKLLQIESNDPLVPELGGDEDDGFFSFSSVEETEESLNCCVPVFDPFSDMLIDDINGFCLVPDEVNNTTTNGELGEVEKAIMDDEGFMGFVPLDMDLEDLTMDVESLLEEEQLCLGFKEPNDVGVIKEENKVGFEINCKDLKRVKDEDEEEEEAKCENGGSKDSDREASNDKDRKTSLFLRLDYGAVISAWDNHGSPWKTGIKPECMLGGNTCLPHVVGGYEKLMSSDGSVTRQQGRDGGGSDGEREARVLRYKEKRRTRLFSKKIRYEVRKLNAEQRPRIKGRFVKRTSLLT</sequence>
<keyword id="KW-0175">Coiled coil</keyword>
<keyword id="KW-0479">Metal-binding</keyword>
<keyword id="KW-0539">Nucleus</keyword>
<keyword id="KW-1185">Reference proteome</keyword>
<keyword id="KW-0862">Zinc</keyword>
<keyword id="KW-0863">Zinc-finger</keyword>
<reference key="1">
    <citation type="journal article" date="2000" name="Nature">
        <title>Sequence and analysis of chromosome 1 of the plant Arabidopsis thaliana.</title>
        <authorList>
            <person name="Theologis A."/>
            <person name="Ecker J.R."/>
            <person name="Palm C.J."/>
            <person name="Federspiel N.A."/>
            <person name="Kaul S."/>
            <person name="White O."/>
            <person name="Alonso J."/>
            <person name="Altafi H."/>
            <person name="Araujo R."/>
            <person name="Bowman C.L."/>
            <person name="Brooks S.Y."/>
            <person name="Buehler E."/>
            <person name="Chan A."/>
            <person name="Chao Q."/>
            <person name="Chen H."/>
            <person name="Cheuk R.F."/>
            <person name="Chin C.W."/>
            <person name="Chung M.K."/>
            <person name="Conn L."/>
            <person name="Conway A.B."/>
            <person name="Conway A.R."/>
            <person name="Creasy T.H."/>
            <person name="Dewar K."/>
            <person name="Dunn P."/>
            <person name="Etgu P."/>
            <person name="Feldblyum T.V."/>
            <person name="Feng J.-D."/>
            <person name="Fong B."/>
            <person name="Fujii C.Y."/>
            <person name="Gill J.E."/>
            <person name="Goldsmith A.D."/>
            <person name="Haas B."/>
            <person name="Hansen N.F."/>
            <person name="Hughes B."/>
            <person name="Huizar L."/>
            <person name="Hunter J.L."/>
            <person name="Jenkins J."/>
            <person name="Johnson-Hopson C."/>
            <person name="Khan S."/>
            <person name="Khaykin E."/>
            <person name="Kim C.J."/>
            <person name="Koo H.L."/>
            <person name="Kremenetskaia I."/>
            <person name="Kurtz D.B."/>
            <person name="Kwan A."/>
            <person name="Lam B."/>
            <person name="Langin-Hooper S."/>
            <person name="Lee A."/>
            <person name="Lee J.M."/>
            <person name="Lenz C.A."/>
            <person name="Li J.H."/>
            <person name="Li Y.-P."/>
            <person name="Lin X."/>
            <person name="Liu S.X."/>
            <person name="Liu Z.A."/>
            <person name="Luros J.S."/>
            <person name="Maiti R."/>
            <person name="Marziali A."/>
            <person name="Militscher J."/>
            <person name="Miranda M."/>
            <person name="Nguyen M."/>
            <person name="Nierman W.C."/>
            <person name="Osborne B.I."/>
            <person name="Pai G."/>
            <person name="Peterson J."/>
            <person name="Pham P.K."/>
            <person name="Rizzo M."/>
            <person name="Rooney T."/>
            <person name="Rowley D."/>
            <person name="Sakano H."/>
            <person name="Salzberg S.L."/>
            <person name="Schwartz J.R."/>
            <person name="Shinn P."/>
            <person name="Southwick A.M."/>
            <person name="Sun H."/>
            <person name="Tallon L.J."/>
            <person name="Tambunga G."/>
            <person name="Toriumi M.J."/>
            <person name="Town C.D."/>
            <person name="Utterback T."/>
            <person name="Van Aken S."/>
            <person name="Vaysberg M."/>
            <person name="Vysotskaia V.S."/>
            <person name="Walker M."/>
            <person name="Wu D."/>
            <person name="Yu G."/>
            <person name="Fraser C.M."/>
            <person name="Venter J.C."/>
            <person name="Davis R.W."/>
        </authorList>
    </citation>
    <scope>NUCLEOTIDE SEQUENCE [LARGE SCALE GENOMIC DNA]</scope>
    <source>
        <strain>cv. Columbia</strain>
    </source>
</reference>
<reference key="2">
    <citation type="journal article" date="2017" name="Plant J.">
        <title>Araport11: a complete reannotation of the Arabidopsis thaliana reference genome.</title>
        <authorList>
            <person name="Cheng C.Y."/>
            <person name="Krishnakumar V."/>
            <person name="Chan A.P."/>
            <person name="Thibaud-Nissen F."/>
            <person name="Schobel S."/>
            <person name="Town C.D."/>
        </authorList>
    </citation>
    <scope>GENOME REANNOTATION</scope>
    <source>
        <strain>cv. Columbia</strain>
    </source>
</reference>
<reference key="3">
    <citation type="submission" date="2004-11" db="EMBL/GenBank/DDBJ databases">
        <title>Arabidopsis ORF clones.</title>
        <authorList>
            <person name="Shinn P."/>
            <person name="Chen H."/>
            <person name="Cheuk R.F."/>
            <person name="Kim C.J."/>
            <person name="Ecker J.R."/>
        </authorList>
    </citation>
    <scope>NUCLEOTIDE SEQUENCE [LARGE SCALE MRNA]</scope>
    <source>
        <strain>cv. Columbia</strain>
    </source>
</reference>
<reference key="4">
    <citation type="journal article" date="2003" name="Plant Physiol.">
        <title>The evolution of CONSTANS-like gene families in barley, rice, and Arabidopsis.</title>
        <authorList>
            <person name="Griffiths S."/>
            <person name="Dunford R.P."/>
            <person name="Coupland G."/>
            <person name="Laurie D.A."/>
        </authorList>
    </citation>
    <scope>GENE FAMILY</scope>
    <scope>NOMENCLATURE</scope>
</reference>
<dbReference type="EMBL" id="AC016662">
    <property type="protein sequence ID" value="AAG52532.1"/>
    <property type="molecule type" value="Genomic_DNA"/>
</dbReference>
<dbReference type="EMBL" id="CP002684">
    <property type="protein sequence ID" value="AEE35518.1"/>
    <property type="molecule type" value="Genomic_DNA"/>
</dbReference>
<dbReference type="EMBL" id="BT015740">
    <property type="protein sequence ID" value="AAU84677.1"/>
    <property type="molecule type" value="mRNA"/>
</dbReference>
<dbReference type="EMBL" id="BT020183">
    <property type="protein sequence ID" value="AAV43785.1"/>
    <property type="molecule type" value="mRNA"/>
</dbReference>
<dbReference type="PIR" id="C96766">
    <property type="entry name" value="C96766"/>
</dbReference>
<dbReference type="SMR" id="Q9C9A9"/>
<dbReference type="BioGRID" id="28942">
    <property type="interactions" value="9"/>
</dbReference>
<dbReference type="FunCoup" id="Q9C9A9">
    <property type="interactions" value="1"/>
</dbReference>
<dbReference type="IntAct" id="Q9C9A9">
    <property type="interactions" value="7"/>
</dbReference>
<dbReference type="STRING" id="3702.Q9C9A9"/>
<dbReference type="PaxDb" id="3702-AT1G73870.1"/>
<dbReference type="EnsemblPlants" id="AT1G73870.1">
    <property type="protein sequence ID" value="AT1G73870.1"/>
    <property type="gene ID" value="AT1G73870"/>
</dbReference>
<dbReference type="GeneID" id="843723"/>
<dbReference type="Gramene" id="AT1G73870.1">
    <property type="protein sequence ID" value="AT1G73870.1"/>
    <property type="gene ID" value="AT1G73870"/>
</dbReference>
<dbReference type="KEGG" id="ath:AT1G73870"/>
<dbReference type="Araport" id="AT1G73870"/>
<dbReference type="TAIR" id="AT1G73870">
    <property type="gene designation" value="BBX16"/>
</dbReference>
<dbReference type="eggNOG" id="KOG1601">
    <property type="taxonomic scope" value="Eukaryota"/>
</dbReference>
<dbReference type="HOGENOM" id="CLU_035373_0_0_1"/>
<dbReference type="InParanoid" id="Q9C9A9"/>
<dbReference type="OMA" id="DDINGFC"/>
<dbReference type="OrthoDB" id="153872at2759"/>
<dbReference type="PhylomeDB" id="Q9C9A9"/>
<dbReference type="PRO" id="PR:Q9C9A9"/>
<dbReference type="Proteomes" id="UP000006548">
    <property type="component" value="Chromosome 1"/>
</dbReference>
<dbReference type="ExpressionAtlas" id="Q9C9A9">
    <property type="expression patterns" value="baseline and differential"/>
</dbReference>
<dbReference type="GO" id="GO:0005730">
    <property type="term" value="C:nucleolus"/>
    <property type="evidence" value="ECO:0000314"/>
    <property type="project" value="TAIR"/>
</dbReference>
<dbReference type="GO" id="GO:0003700">
    <property type="term" value="F:DNA-binding transcription factor activity"/>
    <property type="evidence" value="ECO:0000250"/>
    <property type="project" value="TAIR"/>
</dbReference>
<dbReference type="GO" id="GO:0000976">
    <property type="term" value="F:transcription cis-regulatory region binding"/>
    <property type="evidence" value="ECO:0000353"/>
    <property type="project" value="TAIR"/>
</dbReference>
<dbReference type="GO" id="GO:0008270">
    <property type="term" value="F:zinc ion binding"/>
    <property type="evidence" value="ECO:0007669"/>
    <property type="project" value="UniProtKB-KW"/>
</dbReference>
<dbReference type="GO" id="GO:0045893">
    <property type="term" value="P:positive regulation of DNA-templated transcription"/>
    <property type="evidence" value="ECO:0000315"/>
    <property type="project" value="TAIR"/>
</dbReference>
<dbReference type="GO" id="GO:0006355">
    <property type="term" value="P:regulation of DNA-templated transcription"/>
    <property type="evidence" value="ECO:0000304"/>
    <property type="project" value="TAIR"/>
</dbReference>
<dbReference type="GO" id="GO:0010223">
    <property type="term" value="P:secondary shoot formation"/>
    <property type="evidence" value="ECO:0000315"/>
    <property type="project" value="TAIR"/>
</dbReference>
<dbReference type="GO" id="GO:0009641">
    <property type="term" value="P:shade avoidance"/>
    <property type="evidence" value="ECO:0000315"/>
    <property type="project" value="TAIR"/>
</dbReference>
<dbReference type="CDD" id="cd19821">
    <property type="entry name" value="Bbox1_BBX-like"/>
    <property type="match status" value="1"/>
</dbReference>
<dbReference type="InterPro" id="IPR010402">
    <property type="entry name" value="CCT_domain"/>
</dbReference>
<dbReference type="InterPro" id="IPR049808">
    <property type="entry name" value="CONSTANS-like_Bbox1"/>
</dbReference>
<dbReference type="InterPro" id="IPR052453">
    <property type="entry name" value="CONSTANS-like_ZF"/>
</dbReference>
<dbReference type="InterPro" id="IPR000315">
    <property type="entry name" value="Znf_B-box"/>
</dbReference>
<dbReference type="PANTHER" id="PTHR31874">
    <property type="entry name" value="CCT MOTIF FAMILY PROTEIN, EXPRESSED"/>
    <property type="match status" value="1"/>
</dbReference>
<dbReference type="PANTHER" id="PTHR31874:SF55">
    <property type="entry name" value="ZINC FINGER PROTEIN CONSTANS-LIKE 7"/>
    <property type="match status" value="1"/>
</dbReference>
<dbReference type="Pfam" id="PF06203">
    <property type="entry name" value="CCT"/>
    <property type="match status" value="1"/>
</dbReference>
<dbReference type="Pfam" id="PF00643">
    <property type="entry name" value="zf-B_box"/>
    <property type="match status" value="1"/>
</dbReference>
<dbReference type="SMART" id="SM00336">
    <property type="entry name" value="BBOX"/>
    <property type="match status" value="1"/>
</dbReference>
<dbReference type="PROSITE" id="PS51017">
    <property type="entry name" value="CCT"/>
    <property type="match status" value="1"/>
</dbReference>
<dbReference type="PROSITE" id="PS50119">
    <property type="entry name" value="ZF_BBOX"/>
    <property type="match status" value="1"/>
</dbReference>
<evidence type="ECO:0000255" key="1"/>
<evidence type="ECO:0000255" key="2">
    <source>
        <dbReference type="PROSITE-ProRule" id="PRU00024"/>
    </source>
</evidence>
<evidence type="ECO:0000255" key="3">
    <source>
        <dbReference type="PROSITE-ProRule" id="PRU00357"/>
    </source>
</evidence>
<evidence type="ECO:0000256" key="4">
    <source>
        <dbReference type="SAM" id="MobiDB-lite"/>
    </source>
</evidence>
<evidence type="ECO:0000305" key="5"/>
<proteinExistence type="evidence at transcript level"/>
<protein>
    <recommendedName>
        <fullName>Zinc finger protein CONSTANS-LIKE 7</fullName>
    </recommendedName>
</protein>
<comment type="subcellular location">
    <subcellularLocation>
        <location evidence="3">Nucleus</location>
    </subcellularLocation>
</comment>
<comment type="similarity">
    <text evidence="5">Belongs to the CONSTANS family.</text>
</comment>